<keyword id="KW-0066">ATP synthesis</keyword>
<keyword id="KW-0067">ATP-binding</keyword>
<keyword id="KW-0997">Cell inner membrane</keyword>
<keyword id="KW-1003">Cell membrane</keyword>
<keyword id="KW-0139">CF(1)</keyword>
<keyword id="KW-0375">Hydrogen ion transport</keyword>
<keyword id="KW-0406">Ion transport</keyword>
<keyword id="KW-0472">Membrane</keyword>
<keyword id="KW-0547">Nucleotide-binding</keyword>
<keyword id="KW-1185">Reference proteome</keyword>
<keyword id="KW-1278">Translocase</keyword>
<keyword id="KW-0813">Transport</keyword>
<feature type="chain" id="PRO_1000143499" description="ATP synthase subunit beta">
    <location>
        <begin position="1"/>
        <end position="460"/>
    </location>
</feature>
<feature type="binding site" evidence="1">
    <location>
        <begin position="150"/>
        <end position="157"/>
    </location>
    <ligand>
        <name>ATP</name>
        <dbReference type="ChEBI" id="CHEBI:30616"/>
    </ligand>
</feature>
<sequence length="460" mass="50325">MATGKIVQVIGAVVDVEFPQDAVPRVYDALEVQNGNERLVLEVQQQLGGGIVRTIAMGSSDGLRRGLDVKDLEHPIEVPVGKATLGRIMNVLGEPVDMKGEIGEEERWAIHRAAPSYEELSNSQELLETGIKVIDLMCPFAKGGKVGLFGGAGVGKTVNMMELIRNIAIEHSGYSVFAGVGERTREGNDFYHEMTDSNVIDKVSLVYGQMNEPPGNRLRVALTGLTMAEKFRDEGRDVLLFVDNIYRYTLAGTEVSALLGRMPSAVGYQPTLAEEMGVLQERITSTKTGSITSVQAVYVPADDLTDPSPATTFAHLDATVVLSRQIASLGIYPAVDPLDSTSRQLDPLVVGQEHYDTARGVQSILQRYQELKDIIAILGMDELSEEDKLVVARARKIQRFLSQPFFVAEVFTGSPGKYVSLKDTIRGFKGIMEGEYDHLPEQAFYMVGSIEEAVEKAKKL</sequence>
<accession>B7MGF2</accession>
<evidence type="ECO:0000255" key="1">
    <source>
        <dbReference type="HAMAP-Rule" id="MF_01347"/>
    </source>
</evidence>
<reference key="1">
    <citation type="journal article" date="2009" name="PLoS Genet.">
        <title>Organised genome dynamics in the Escherichia coli species results in highly diverse adaptive paths.</title>
        <authorList>
            <person name="Touchon M."/>
            <person name="Hoede C."/>
            <person name="Tenaillon O."/>
            <person name="Barbe V."/>
            <person name="Baeriswyl S."/>
            <person name="Bidet P."/>
            <person name="Bingen E."/>
            <person name="Bonacorsi S."/>
            <person name="Bouchier C."/>
            <person name="Bouvet O."/>
            <person name="Calteau A."/>
            <person name="Chiapello H."/>
            <person name="Clermont O."/>
            <person name="Cruveiller S."/>
            <person name="Danchin A."/>
            <person name="Diard M."/>
            <person name="Dossat C."/>
            <person name="Karoui M.E."/>
            <person name="Frapy E."/>
            <person name="Garry L."/>
            <person name="Ghigo J.M."/>
            <person name="Gilles A.M."/>
            <person name="Johnson J."/>
            <person name="Le Bouguenec C."/>
            <person name="Lescat M."/>
            <person name="Mangenot S."/>
            <person name="Martinez-Jehanne V."/>
            <person name="Matic I."/>
            <person name="Nassif X."/>
            <person name="Oztas S."/>
            <person name="Petit M.A."/>
            <person name="Pichon C."/>
            <person name="Rouy Z."/>
            <person name="Ruf C.S."/>
            <person name="Schneider D."/>
            <person name="Tourret J."/>
            <person name="Vacherie B."/>
            <person name="Vallenet D."/>
            <person name="Medigue C."/>
            <person name="Rocha E.P.C."/>
            <person name="Denamur E."/>
        </authorList>
    </citation>
    <scope>NUCLEOTIDE SEQUENCE [LARGE SCALE GENOMIC DNA]</scope>
    <source>
        <strain>S88 / ExPEC</strain>
    </source>
</reference>
<gene>
    <name evidence="1" type="primary">atpD</name>
    <name type="ordered locus">ECS88_4154</name>
</gene>
<dbReference type="EC" id="7.1.2.2" evidence="1"/>
<dbReference type="EMBL" id="CU928161">
    <property type="protein sequence ID" value="CAR05360.1"/>
    <property type="molecule type" value="Genomic_DNA"/>
</dbReference>
<dbReference type="RefSeq" id="WP_000190506.1">
    <property type="nucleotide sequence ID" value="NC_011742.1"/>
</dbReference>
<dbReference type="EMDB" id="EMD-8357"/>
<dbReference type="EMDB" id="EMD-8358"/>
<dbReference type="EMDB" id="EMD-8359"/>
<dbReference type="SMR" id="B7MGF2"/>
<dbReference type="GeneID" id="93778235"/>
<dbReference type="KEGG" id="ecz:ECS88_4154"/>
<dbReference type="HOGENOM" id="CLU_022398_0_2_6"/>
<dbReference type="Proteomes" id="UP000000747">
    <property type="component" value="Chromosome"/>
</dbReference>
<dbReference type="GO" id="GO:0005886">
    <property type="term" value="C:plasma membrane"/>
    <property type="evidence" value="ECO:0007669"/>
    <property type="project" value="UniProtKB-SubCell"/>
</dbReference>
<dbReference type="GO" id="GO:0045259">
    <property type="term" value="C:proton-transporting ATP synthase complex"/>
    <property type="evidence" value="ECO:0007669"/>
    <property type="project" value="UniProtKB-KW"/>
</dbReference>
<dbReference type="GO" id="GO:0005524">
    <property type="term" value="F:ATP binding"/>
    <property type="evidence" value="ECO:0007669"/>
    <property type="project" value="UniProtKB-UniRule"/>
</dbReference>
<dbReference type="GO" id="GO:0016887">
    <property type="term" value="F:ATP hydrolysis activity"/>
    <property type="evidence" value="ECO:0007669"/>
    <property type="project" value="InterPro"/>
</dbReference>
<dbReference type="GO" id="GO:0046933">
    <property type="term" value="F:proton-transporting ATP synthase activity, rotational mechanism"/>
    <property type="evidence" value="ECO:0007669"/>
    <property type="project" value="UniProtKB-UniRule"/>
</dbReference>
<dbReference type="CDD" id="cd18110">
    <property type="entry name" value="ATP-synt_F1_beta_C"/>
    <property type="match status" value="1"/>
</dbReference>
<dbReference type="CDD" id="cd18115">
    <property type="entry name" value="ATP-synt_F1_beta_N"/>
    <property type="match status" value="1"/>
</dbReference>
<dbReference type="CDD" id="cd01133">
    <property type="entry name" value="F1-ATPase_beta_CD"/>
    <property type="match status" value="1"/>
</dbReference>
<dbReference type="FunFam" id="1.10.1140.10:FF:000001">
    <property type="entry name" value="ATP synthase subunit beta"/>
    <property type="match status" value="1"/>
</dbReference>
<dbReference type="FunFam" id="2.40.10.170:FF:000003">
    <property type="entry name" value="ATP synthase subunit beta"/>
    <property type="match status" value="1"/>
</dbReference>
<dbReference type="FunFam" id="3.40.50.300:FF:000004">
    <property type="entry name" value="ATP synthase subunit beta"/>
    <property type="match status" value="1"/>
</dbReference>
<dbReference type="Gene3D" id="2.40.10.170">
    <property type="match status" value="1"/>
</dbReference>
<dbReference type="Gene3D" id="1.10.1140.10">
    <property type="entry name" value="Bovine Mitochondrial F1-atpase, Atp Synthase Beta Chain, Chain D, domain 3"/>
    <property type="match status" value="1"/>
</dbReference>
<dbReference type="Gene3D" id="3.40.50.300">
    <property type="entry name" value="P-loop containing nucleotide triphosphate hydrolases"/>
    <property type="match status" value="1"/>
</dbReference>
<dbReference type="HAMAP" id="MF_01347">
    <property type="entry name" value="ATP_synth_beta_bact"/>
    <property type="match status" value="1"/>
</dbReference>
<dbReference type="InterPro" id="IPR003593">
    <property type="entry name" value="AAA+_ATPase"/>
</dbReference>
<dbReference type="InterPro" id="IPR055190">
    <property type="entry name" value="ATP-synt_VA_C"/>
</dbReference>
<dbReference type="InterPro" id="IPR005722">
    <property type="entry name" value="ATP_synth_F1_bsu"/>
</dbReference>
<dbReference type="InterPro" id="IPR020003">
    <property type="entry name" value="ATPase_a/bsu_AS"/>
</dbReference>
<dbReference type="InterPro" id="IPR050053">
    <property type="entry name" value="ATPase_alpha/beta_chains"/>
</dbReference>
<dbReference type="InterPro" id="IPR004100">
    <property type="entry name" value="ATPase_F1/V1/A1_a/bsu_N"/>
</dbReference>
<dbReference type="InterPro" id="IPR036121">
    <property type="entry name" value="ATPase_F1/V1/A1_a/bsu_N_sf"/>
</dbReference>
<dbReference type="InterPro" id="IPR000194">
    <property type="entry name" value="ATPase_F1/V1/A1_a/bsu_nucl-bd"/>
</dbReference>
<dbReference type="InterPro" id="IPR024034">
    <property type="entry name" value="ATPase_F1/V1_b/a_C"/>
</dbReference>
<dbReference type="InterPro" id="IPR027417">
    <property type="entry name" value="P-loop_NTPase"/>
</dbReference>
<dbReference type="NCBIfam" id="TIGR01039">
    <property type="entry name" value="atpD"/>
    <property type="match status" value="1"/>
</dbReference>
<dbReference type="PANTHER" id="PTHR15184">
    <property type="entry name" value="ATP SYNTHASE"/>
    <property type="match status" value="1"/>
</dbReference>
<dbReference type="PANTHER" id="PTHR15184:SF71">
    <property type="entry name" value="ATP SYNTHASE SUBUNIT BETA, MITOCHONDRIAL"/>
    <property type="match status" value="1"/>
</dbReference>
<dbReference type="Pfam" id="PF00006">
    <property type="entry name" value="ATP-synt_ab"/>
    <property type="match status" value="1"/>
</dbReference>
<dbReference type="Pfam" id="PF02874">
    <property type="entry name" value="ATP-synt_ab_N"/>
    <property type="match status" value="1"/>
</dbReference>
<dbReference type="Pfam" id="PF22919">
    <property type="entry name" value="ATP-synt_VA_C"/>
    <property type="match status" value="1"/>
</dbReference>
<dbReference type="SMART" id="SM00382">
    <property type="entry name" value="AAA"/>
    <property type="match status" value="1"/>
</dbReference>
<dbReference type="SUPFAM" id="SSF47917">
    <property type="entry name" value="C-terminal domain of alpha and beta subunits of F1 ATP synthase"/>
    <property type="match status" value="1"/>
</dbReference>
<dbReference type="SUPFAM" id="SSF50615">
    <property type="entry name" value="N-terminal domain of alpha and beta subunits of F1 ATP synthase"/>
    <property type="match status" value="1"/>
</dbReference>
<dbReference type="SUPFAM" id="SSF52540">
    <property type="entry name" value="P-loop containing nucleoside triphosphate hydrolases"/>
    <property type="match status" value="1"/>
</dbReference>
<dbReference type="PROSITE" id="PS00152">
    <property type="entry name" value="ATPASE_ALPHA_BETA"/>
    <property type="match status" value="1"/>
</dbReference>
<comment type="function">
    <text evidence="1">Produces ATP from ADP in the presence of a proton gradient across the membrane. The catalytic sites are hosted primarily by the beta subunits.</text>
</comment>
<comment type="catalytic activity">
    <reaction evidence="1">
        <text>ATP + H2O + 4 H(+)(in) = ADP + phosphate + 5 H(+)(out)</text>
        <dbReference type="Rhea" id="RHEA:57720"/>
        <dbReference type="ChEBI" id="CHEBI:15377"/>
        <dbReference type="ChEBI" id="CHEBI:15378"/>
        <dbReference type="ChEBI" id="CHEBI:30616"/>
        <dbReference type="ChEBI" id="CHEBI:43474"/>
        <dbReference type="ChEBI" id="CHEBI:456216"/>
        <dbReference type="EC" id="7.1.2.2"/>
    </reaction>
</comment>
<comment type="subunit">
    <text evidence="1">F-type ATPases have 2 components, CF(1) - the catalytic core - and CF(0) - the membrane proton channel. CF(1) has five subunits: alpha(3), beta(3), gamma(1), delta(1), epsilon(1). CF(0) has three main subunits: a(1), b(2) and c(9-12). The alpha and beta chains form an alternating ring which encloses part of the gamma chain. CF(1) is attached to CF(0) by a central stalk formed by the gamma and epsilon chains, while a peripheral stalk is formed by the delta and b chains.</text>
</comment>
<comment type="subcellular location">
    <subcellularLocation>
        <location evidence="1">Cell inner membrane</location>
        <topology evidence="1">Peripheral membrane protein</topology>
    </subcellularLocation>
</comment>
<comment type="similarity">
    <text evidence="1">Belongs to the ATPase alpha/beta chains family.</text>
</comment>
<proteinExistence type="inferred from homology"/>
<organism>
    <name type="scientific">Escherichia coli O45:K1 (strain S88 / ExPEC)</name>
    <dbReference type="NCBI Taxonomy" id="585035"/>
    <lineage>
        <taxon>Bacteria</taxon>
        <taxon>Pseudomonadati</taxon>
        <taxon>Pseudomonadota</taxon>
        <taxon>Gammaproteobacteria</taxon>
        <taxon>Enterobacterales</taxon>
        <taxon>Enterobacteriaceae</taxon>
        <taxon>Escherichia</taxon>
    </lineage>
</organism>
<protein>
    <recommendedName>
        <fullName evidence="1">ATP synthase subunit beta</fullName>
        <ecNumber evidence="1">7.1.2.2</ecNumber>
    </recommendedName>
    <alternativeName>
        <fullName evidence="1">ATP synthase F1 sector subunit beta</fullName>
    </alternativeName>
    <alternativeName>
        <fullName evidence="1">F-ATPase subunit beta</fullName>
    </alternativeName>
</protein>
<name>ATPB_ECO45</name>